<proteinExistence type="evidence at transcript level"/>
<reference key="1">
    <citation type="journal article" date="2005" name="Science">
        <title>The transcriptional landscape of the mammalian genome.</title>
        <authorList>
            <person name="Carninci P."/>
            <person name="Kasukawa T."/>
            <person name="Katayama S."/>
            <person name="Gough J."/>
            <person name="Frith M.C."/>
            <person name="Maeda N."/>
            <person name="Oyama R."/>
            <person name="Ravasi T."/>
            <person name="Lenhard B."/>
            <person name="Wells C."/>
            <person name="Kodzius R."/>
            <person name="Shimokawa K."/>
            <person name="Bajic V.B."/>
            <person name="Brenner S.E."/>
            <person name="Batalov S."/>
            <person name="Forrest A.R."/>
            <person name="Zavolan M."/>
            <person name="Davis M.J."/>
            <person name="Wilming L.G."/>
            <person name="Aidinis V."/>
            <person name="Allen J.E."/>
            <person name="Ambesi-Impiombato A."/>
            <person name="Apweiler R."/>
            <person name="Aturaliya R.N."/>
            <person name="Bailey T.L."/>
            <person name="Bansal M."/>
            <person name="Baxter L."/>
            <person name="Beisel K.W."/>
            <person name="Bersano T."/>
            <person name="Bono H."/>
            <person name="Chalk A.M."/>
            <person name="Chiu K.P."/>
            <person name="Choudhary V."/>
            <person name="Christoffels A."/>
            <person name="Clutterbuck D.R."/>
            <person name="Crowe M.L."/>
            <person name="Dalla E."/>
            <person name="Dalrymple B.P."/>
            <person name="de Bono B."/>
            <person name="Della Gatta G."/>
            <person name="di Bernardo D."/>
            <person name="Down T."/>
            <person name="Engstrom P."/>
            <person name="Fagiolini M."/>
            <person name="Faulkner G."/>
            <person name="Fletcher C.F."/>
            <person name="Fukushima T."/>
            <person name="Furuno M."/>
            <person name="Futaki S."/>
            <person name="Gariboldi M."/>
            <person name="Georgii-Hemming P."/>
            <person name="Gingeras T.R."/>
            <person name="Gojobori T."/>
            <person name="Green R.E."/>
            <person name="Gustincich S."/>
            <person name="Harbers M."/>
            <person name="Hayashi Y."/>
            <person name="Hensch T.K."/>
            <person name="Hirokawa N."/>
            <person name="Hill D."/>
            <person name="Huminiecki L."/>
            <person name="Iacono M."/>
            <person name="Ikeo K."/>
            <person name="Iwama A."/>
            <person name="Ishikawa T."/>
            <person name="Jakt M."/>
            <person name="Kanapin A."/>
            <person name="Katoh M."/>
            <person name="Kawasawa Y."/>
            <person name="Kelso J."/>
            <person name="Kitamura H."/>
            <person name="Kitano H."/>
            <person name="Kollias G."/>
            <person name="Krishnan S.P."/>
            <person name="Kruger A."/>
            <person name="Kummerfeld S.K."/>
            <person name="Kurochkin I.V."/>
            <person name="Lareau L.F."/>
            <person name="Lazarevic D."/>
            <person name="Lipovich L."/>
            <person name="Liu J."/>
            <person name="Liuni S."/>
            <person name="McWilliam S."/>
            <person name="Madan Babu M."/>
            <person name="Madera M."/>
            <person name="Marchionni L."/>
            <person name="Matsuda H."/>
            <person name="Matsuzawa S."/>
            <person name="Miki H."/>
            <person name="Mignone F."/>
            <person name="Miyake S."/>
            <person name="Morris K."/>
            <person name="Mottagui-Tabar S."/>
            <person name="Mulder N."/>
            <person name="Nakano N."/>
            <person name="Nakauchi H."/>
            <person name="Ng P."/>
            <person name="Nilsson R."/>
            <person name="Nishiguchi S."/>
            <person name="Nishikawa S."/>
            <person name="Nori F."/>
            <person name="Ohara O."/>
            <person name="Okazaki Y."/>
            <person name="Orlando V."/>
            <person name="Pang K.C."/>
            <person name="Pavan W.J."/>
            <person name="Pavesi G."/>
            <person name="Pesole G."/>
            <person name="Petrovsky N."/>
            <person name="Piazza S."/>
            <person name="Reed J."/>
            <person name="Reid J.F."/>
            <person name="Ring B.Z."/>
            <person name="Ringwald M."/>
            <person name="Rost B."/>
            <person name="Ruan Y."/>
            <person name="Salzberg S.L."/>
            <person name="Sandelin A."/>
            <person name="Schneider C."/>
            <person name="Schoenbach C."/>
            <person name="Sekiguchi K."/>
            <person name="Semple C.A."/>
            <person name="Seno S."/>
            <person name="Sessa L."/>
            <person name="Sheng Y."/>
            <person name="Shibata Y."/>
            <person name="Shimada H."/>
            <person name="Shimada K."/>
            <person name="Silva D."/>
            <person name="Sinclair B."/>
            <person name="Sperling S."/>
            <person name="Stupka E."/>
            <person name="Sugiura K."/>
            <person name="Sultana R."/>
            <person name="Takenaka Y."/>
            <person name="Taki K."/>
            <person name="Tammoja K."/>
            <person name="Tan S.L."/>
            <person name="Tang S."/>
            <person name="Taylor M.S."/>
            <person name="Tegner J."/>
            <person name="Teichmann S.A."/>
            <person name="Ueda H.R."/>
            <person name="van Nimwegen E."/>
            <person name="Verardo R."/>
            <person name="Wei C.L."/>
            <person name="Yagi K."/>
            <person name="Yamanishi H."/>
            <person name="Zabarovsky E."/>
            <person name="Zhu S."/>
            <person name="Zimmer A."/>
            <person name="Hide W."/>
            <person name="Bult C."/>
            <person name="Grimmond S.M."/>
            <person name="Teasdale R.D."/>
            <person name="Liu E.T."/>
            <person name="Brusic V."/>
            <person name="Quackenbush J."/>
            <person name="Wahlestedt C."/>
            <person name="Mattick J.S."/>
            <person name="Hume D.A."/>
            <person name="Kai C."/>
            <person name="Sasaki D."/>
            <person name="Tomaru Y."/>
            <person name="Fukuda S."/>
            <person name="Kanamori-Katayama M."/>
            <person name="Suzuki M."/>
            <person name="Aoki J."/>
            <person name="Arakawa T."/>
            <person name="Iida J."/>
            <person name="Imamura K."/>
            <person name="Itoh M."/>
            <person name="Kato T."/>
            <person name="Kawaji H."/>
            <person name="Kawagashira N."/>
            <person name="Kawashima T."/>
            <person name="Kojima M."/>
            <person name="Kondo S."/>
            <person name="Konno H."/>
            <person name="Nakano K."/>
            <person name="Ninomiya N."/>
            <person name="Nishio T."/>
            <person name="Okada M."/>
            <person name="Plessy C."/>
            <person name="Shibata K."/>
            <person name="Shiraki T."/>
            <person name="Suzuki S."/>
            <person name="Tagami M."/>
            <person name="Waki K."/>
            <person name="Watahiki A."/>
            <person name="Okamura-Oho Y."/>
            <person name="Suzuki H."/>
            <person name="Kawai J."/>
            <person name="Hayashizaki Y."/>
        </authorList>
    </citation>
    <scope>NUCLEOTIDE SEQUENCE [LARGE SCALE MRNA]</scope>
    <source>
        <strain>C57BL/6J</strain>
        <tissue>Testis</tissue>
    </source>
</reference>
<reference key="2">
    <citation type="journal article" date="2009" name="PLoS Biol.">
        <title>Lineage-specific biology revealed by a finished genome assembly of the mouse.</title>
        <authorList>
            <person name="Church D.M."/>
            <person name="Goodstadt L."/>
            <person name="Hillier L.W."/>
            <person name="Zody M.C."/>
            <person name="Goldstein S."/>
            <person name="She X."/>
            <person name="Bult C.J."/>
            <person name="Agarwala R."/>
            <person name="Cherry J.L."/>
            <person name="DiCuccio M."/>
            <person name="Hlavina W."/>
            <person name="Kapustin Y."/>
            <person name="Meric P."/>
            <person name="Maglott D."/>
            <person name="Birtle Z."/>
            <person name="Marques A.C."/>
            <person name="Graves T."/>
            <person name="Zhou S."/>
            <person name="Teague B."/>
            <person name="Potamousis K."/>
            <person name="Churas C."/>
            <person name="Place M."/>
            <person name="Herschleb J."/>
            <person name="Runnheim R."/>
            <person name="Forrest D."/>
            <person name="Amos-Landgraf J."/>
            <person name="Schwartz D.C."/>
            <person name="Cheng Z."/>
            <person name="Lindblad-Toh K."/>
            <person name="Eichler E.E."/>
            <person name="Ponting C.P."/>
        </authorList>
    </citation>
    <scope>NUCLEOTIDE SEQUENCE [LARGE SCALE GENOMIC DNA]</scope>
    <source>
        <strain>C57BL/6J</strain>
    </source>
</reference>
<reference key="3">
    <citation type="journal article" date="2004" name="Genome Res.">
        <title>The status, quality, and expansion of the NIH full-length cDNA project: the Mammalian Gene Collection (MGC).</title>
        <authorList>
            <consortium name="The MGC Project Team"/>
        </authorList>
    </citation>
    <scope>NUCLEOTIDE SEQUENCE [LARGE SCALE MRNA]</scope>
</reference>
<feature type="chain" id="PRO_0000321822" description="Uncharacterized protein C5orf47 homolog">
    <location>
        <begin position="1"/>
        <end position="165"/>
    </location>
</feature>
<feature type="region of interest" description="Disordered" evidence="1">
    <location>
        <begin position="51"/>
        <end position="102"/>
    </location>
</feature>
<feature type="compositionally biased region" description="Polar residues" evidence="1">
    <location>
        <begin position="66"/>
        <end position="76"/>
    </location>
</feature>
<feature type="sequence conflict" description="In Ref. 3; AAI14575." evidence="2" ref="3">
    <original>C</original>
    <variation>S</variation>
    <location>
        <position position="48"/>
    </location>
</feature>
<feature type="sequence conflict" description="In Ref. 3; AAI14575." evidence="2" ref="3">
    <original>A</original>
    <variation>G</variation>
    <location>
        <position position="90"/>
    </location>
</feature>
<keyword id="KW-1185">Reference proteome</keyword>
<name>CE047_MOUSE</name>
<protein>
    <recommendedName>
        <fullName>Uncharacterized protein C5orf47 homolog</fullName>
    </recommendedName>
</protein>
<dbReference type="EMBL" id="AK015006">
    <property type="protein sequence ID" value="BAB29668.1"/>
    <property type="molecule type" value="mRNA"/>
</dbReference>
<dbReference type="EMBL" id="AK015777">
    <property type="protein sequence ID" value="BAC25469.1"/>
    <property type="molecule type" value="mRNA"/>
</dbReference>
<dbReference type="EMBL" id="AK015879">
    <property type="protein sequence ID" value="BAB30014.1"/>
    <property type="molecule type" value="mRNA"/>
</dbReference>
<dbReference type="EMBL" id="AL669946">
    <property type="status" value="NOT_ANNOTATED_CDS"/>
    <property type="molecule type" value="Genomic_DNA"/>
</dbReference>
<dbReference type="EMBL" id="BC114574">
    <property type="protein sequence ID" value="AAI14575.1"/>
    <property type="molecule type" value="mRNA"/>
</dbReference>
<dbReference type="CCDS" id="CCDS24515.1"/>
<dbReference type="RefSeq" id="NP_001404797.1">
    <property type="nucleotide sequence ID" value="NM_001417868.1"/>
</dbReference>
<dbReference type="RefSeq" id="NP_080538.1">
    <property type="nucleotide sequence ID" value="NM_026262.2"/>
</dbReference>
<dbReference type="RefSeq" id="XP_006514858.1">
    <property type="nucleotide sequence ID" value="XM_006514795.1"/>
</dbReference>
<dbReference type="BioGRID" id="212300">
    <property type="interactions" value="1"/>
</dbReference>
<dbReference type="iPTMnet" id="Q24JP4"/>
<dbReference type="PhosphoSitePlus" id="Q24JP4"/>
<dbReference type="PaxDb" id="10090-ENSMUSP00000099893"/>
<dbReference type="Ensembl" id="ENSMUST00000102829.4">
    <property type="protein sequence ID" value="ENSMUSP00000099893.4"/>
    <property type="gene ID" value="ENSMUSG00000020299.7"/>
</dbReference>
<dbReference type="GeneID" id="67592"/>
<dbReference type="KEGG" id="mmu:67592"/>
<dbReference type="UCSC" id="uc007iiu.1">
    <property type="organism name" value="mouse"/>
</dbReference>
<dbReference type="AGR" id="MGI:1914842"/>
<dbReference type="MGI" id="MGI:1914842">
    <property type="gene designation" value="4930524B15Rik"/>
</dbReference>
<dbReference type="VEuPathDB" id="HostDB:ENSMUSG00000020299"/>
<dbReference type="eggNOG" id="ENOG502T1NK">
    <property type="taxonomic scope" value="Eukaryota"/>
</dbReference>
<dbReference type="GeneTree" id="ENSGT00640000091672"/>
<dbReference type="HOGENOM" id="CLU_1495669_0_0_1"/>
<dbReference type="InParanoid" id="Q24JP4"/>
<dbReference type="OMA" id="GAGCRQE"/>
<dbReference type="OrthoDB" id="9392174at2759"/>
<dbReference type="PhylomeDB" id="Q24JP4"/>
<dbReference type="TreeFam" id="TF337018"/>
<dbReference type="BioGRID-ORCS" id="67592">
    <property type="hits" value="2 hits in 77 CRISPR screens"/>
</dbReference>
<dbReference type="PRO" id="PR:Q24JP4"/>
<dbReference type="Proteomes" id="UP000000589">
    <property type="component" value="Chromosome 11"/>
</dbReference>
<dbReference type="RNAct" id="Q24JP4">
    <property type="molecule type" value="protein"/>
</dbReference>
<dbReference type="Bgee" id="ENSMUSG00000020299">
    <property type="expression patterns" value="Expressed in spermatocyte and 9 other cell types or tissues"/>
</dbReference>
<dbReference type="InterPro" id="IPR031464">
    <property type="entry name" value="DUF4680"/>
</dbReference>
<dbReference type="PANTHER" id="PTHR38655">
    <property type="entry name" value="SIMILAR TO RIKEN CDNA 4930524B15"/>
    <property type="match status" value="1"/>
</dbReference>
<dbReference type="PANTHER" id="PTHR38655:SF1">
    <property type="entry name" value="SIMILAR TO RIKEN CDNA 4930524B15"/>
    <property type="match status" value="1"/>
</dbReference>
<dbReference type="Pfam" id="PF15730">
    <property type="entry name" value="DUF4680"/>
    <property type="match status" value="1"/>
</dbReference>
<evidence type="ECO:0000256" key="1">
    <source>
        <dbReference type="SAM" id="MobiDB-lite"/>
    </source>
</evidence>
<evidence type="ECO:0000305" key="2"/>
<sequence>MVPSRSGQRPDGPRLIYVTRFASHRHGVWQLRGLRGFGHRGPGLGARCASKQAAVEPGARGGERPTGSQAGVTDTPDSAPFQRRSRAPRAREQAAQAGLNQKNAAKEFDFPIPLNEASKLMKERKKASVWSKVQQVISRMIAENESYRRRLQCQRVSSEIRVAAR</sequence>
<organism>
    <name type="scientific">Mus musculus</name>
    <name type="common">Mouse</name>
    <dbReference type="NCBI Taxonomy" id="10090"/>
    <lineage>
        <taxon>Eukaryota</taxon>
        <taxon>Metazoa</taxon>
        <taxon>Chordata</taxon>
        <taxon>Craniata</taxon>
        <taxon>Vertebrata</taxon>
        <taxon>Euteleostomi</taxon>
        <taxon>Mammalia</taxon>
        <taxon>Eutheria</taxon>
        <taxon>Euarchontoglires</taxon>
        <taxon>Glires</taxon>
        <taxon>Rodentia</taxon>
        <taxon>Myomorpha</taxon>
        <taxon>Muroidea</taxon>
        <taxon>Muridae</taxon>
        <taxon>Murinae</taxon>
        <taxon>Mus</taxon>
        <taxon>Mus</taxon>
    </lineage>
</organism>
<accession>Q24JP4</accession>
<accession>Q8CER9</accession>
<accession>Q9CQS0</accession>